<evidence type="ECO:0000255" key="1">
    <source>
        <dbReference type="HAMAP-Rule" id="MF_01267"/>
    </source>
</evidence>
<sequence length="216" mass="23578">MSLPMLQVALDNQTMDSAYETTRLIAEEVDIIEVGTILCVGEGVRAVRDLKALYPHKIVLADAKIADAGKILSRMCFEANADWVTVICCADINTAKGALDVAKEFNGDVQIELTGYWTWEQAQQWRDAGIGQVVYHRSRDAQAAGVAWGEADITAIKRLSDMGFKVTVTGGLALEDLPLFKGIPIHVFIAGRSIRDAASPVEAARQFKRSIAELWG</sequence>
<proteinExistence type="inferred from homology"/>
<keyword id="KW-0119">Carbohydrate metabolism</keyword>
<keyword id="KW-0210">Decarboxylase</keyword>
<keyword id="KW-0456">Lyase</keyword>
<keyword id="KW-0460">Magnesium</keyword>
<keyword id="KW-0479">Metal-binding</keyword>
<keyword id="KW-1185">Reference proteome</keyword>
<feature type="chain" id="PRO_1000165140" description="3-keto-L-gulonate-6-phosphate decarboxylase UlaD">
    <location>
        <begin position="1"/>
        <end position="216"/>
    </location>
</feature>
<feature type="binding site" evidence="1">
    <location>
        <position position="11"/>
    </location>
    <ligand>
        <name>substrate</name>
    </ligand>
</feature>
<feature type="binding site" evidence="1">
    <location>
        <position position="33"/>
    </location>
    <ligand>
        <name>Mg(2+)</name>
        <dbReference type="ChEBI" id="CHEBI:18420"/>
    </ligand>
</feature>
<feature type="binding site" evidence="1">
    <location>
        <position position="62"/>
    </location>
    <ligand>
        <name>Mg(2+)</name>
        <dbReference type="ChEBI" id="CHEBI:18420"/>
    </ligand>
</feature>
<feature type="binding site" evidence="1">
    <location>
        <position position="192"/>
    </location>
    <ligand>
        <name>substrate</name>
    </ligand>
</feature>
<feature type="site" description="Transition state stabilizer" evidence="1">
    <location>
        <position position="64"/>
    </location>
</feature>
<feature type="site" description="Transition state stabilizer" evidence="1">
    <location>
        <position position="67"/>
    </location>
</feature>
<protein>
    <recommendedName>
        <fullName evidence="1">3-keto-L-gulonate-6-phosphate decarboxylase UlaD</fullName>
        <ecNumber evidence="1">4.1.1.85</ecNumber>
    </recommendedName>
    <alternativeName>
        <fullName evidence="1">3-dehydro-L-gulonate-6-phosphate decarboxylase</fullName>
    </alternativeName>
    <alternativeName>
        <fullName evidence="1">KGPDC</fullName>
    </alternativeName>
    <alternativeName>
        <fullName evidence="1">L-ascorbate utilization protein D</fullName>
    </alternativeName>
</protein>
<accession>B7UQK5</accession>
<gene>
    <name evidence="1" type="primary">ulaD</name>
    <name type="ordered locus">E2348C_4519</name>
</gene>
<dbReference type="EC" id="4.1.1.85" evidence="1"/>
<dbReference type="EMBL" id="FM180568">
    <property type="protein sequence ID" value="CAS12067.1"/>
    <property type="molecule type" value="Genomic_DNA"/>
</dbReference>
<dbReference type="RefSeq" id="WP_000056749.1">
    <property type="nucleotide sequence ID" value="NC_011601.1"/>
</dbReference>
<dbReference type="SMR" id="B7UQK5"/>
<dbReference type="KEGG" id="ecg:E2348C_4519"/>
<dbReference type="HOGENOM" id="CLU_081825_0_0_6"/>
<dbReference type="UniPathway" id="UPA00263">
    <property type="reaction ID" value="UER00378"/>
</dbReference>
<dbReference type="Proteomes" id="UP000008205">
    <property type="component" value="Chromosome"/>
</dbReference>
<dbReference type="GO" id="GO:0033982">
    <property type="term" value="F:3-dehydro-L-gulonate-6-phosphate decarboxylase activity"/>
    <property type="evidence" value="ECO:0007669"/>
    <property type="project" value="UniProtKB-EC"/>
</dbReference>
<dbReference type="GO" id="GO:0000287">
    <property type="term" value="F:magnesium ion binding"/>
    <property type="evidence" value="ECO:0007669"/>
    <property type="project" value="UniProtKB-UniRule"/>
</dbReference>
<dbReference type="GO" id="GO:0004590">
    <property type="term" value="F:orotidine-5'-phosphate decarboxylase activity"/>
    <property type="evidence" value="ECO:0007669"/>
    <property type="project" value="InterPro"/>
</dbReference>
<dbReference type="GO" id="GO:0006207">
    <property type="term" value="P:'de novo' pyrimidine nucleobase biosynthetic process"/>
    <property type="evidence" value="ECO:0007669"/>
    <property type="project" value="InterPro"/>
</dbReference>
<dbReference type="GO" id="GO:0019854">
    <property type="term" value="P:L-ascorbic acid catabolic process"/>
    <property type="evidence" value="ECO:0007669"/>
    <property type="project" value="UniProtKB-UniRule"/>
</dbReference>
<dbReference type="CDD" id="cd04726">
    <property type="entry name" value="KGPDC_HPS"/>
    <property type="match status" value="1"/>
</dbReference>
<dbReference type="FunFam" id="3.20.20.70:FF:000022">
    <property type="entry name" value="3-keto-L-gulonate-6-phosphate decarboxylase UlaD"/>
    <property type="match status" value="1"/>
</dbReference>
<dbReference type="Gene3D" id="3.20.20.70">
    <property type="entry name" value="Aldolase class I"/>
    <property type="match status" value="1"/>
</dbReference>
<dbReference type="HAMAP" id="MF_01267">
    <property type="entry name" value="UlaD"/>
    <property type="match status" value="1"/>
</dbReference>
<dbReference type="InterPro" id="IPR023942">
    <property type="entry name" value="3-keto-L-gulonate6Pdecase_UlaD"/>
</dbReference>
<dbReference type="InterPro" id="IPR013785">
    <property type="entry name" value="Aldolase_TIM"/>
</dbReference>
<dbReference type="InterPro" id="IPR041710">
    <property type="entry name" value="HPS/KGPDC"/>
</dbReference>
<dbReference type="InterPro" id="IPR001754">
    <property type="entry name" value="OMPdeCOase_dom"/>
</dbReference>
<dbReference type="InterPro" id="IPR011060">
    <property type="entry name" value="RibuloseP-bd_barrel"/>
</dbReference>
<dbReference type="NCBIfam" id="NF009832">
    <property type="entry name" value="PRK13306.1"/>
    <property type="match status" value="1"/>
</dbReference>
<dbReference type="PANTHER" id="PTHR35039">
    <property type="entry name" value="3-KETO-L-GULONATE-6-PHOSPHATE DECARBOXYLASE SGBH-RELATED"/>
    <property type="match status" value="1"/>
</dbReference>
<dbReference type="PANTHER" id="PTHR35039:SF3">
    <property type="entry name" value="3-KETO-L-GULONATE-6-PHOSPHATE DECARBOXYLASE SGBH-RELATED"/>
    <property type="match status" value="1"/>
</dbReference>
<dbReference type="Pfam" id="PF00215">
    <property type="entry name" value="OMPdecase"/>
    <property type="match status" value="1"/>
</dbReference>
<dbReference type="SMART" id="SM00934">
    <property type="entry name" value="OMPdecase"/>
    <property type="match status" value="1"/>
</dbReference>
<dbReference type="SUPFAM" id="SSF51366">
    <property type="entry name" value="Ribulose-phoshate binding barrel"/>
    <property type="match status" value="1"/>
</dbReference>
<reference key="1">
    <citation type="journal article" date="2009" name="J. Bacteriol.">
        <title>Complete genome sequence and comparative genome analysis of enteropathogenic Escherichia coli O127:H6 strain E2348/69.</title>
        <authorList>
            <person name="Iguchi A."/>
            <person name="Thomson N.R."/>
            <person name="Ogura Y."/>
            <person name="Saunders D."/>
            <person name="Ooka T."/>
            <person name="Henderson I.R."/>
            <person name="Harris D."/>
            <person name="Asadulghani M."/>
            <person name="Kurokawa K."/>
            <person name="Dean P."/>
            <person name="Kenny B."/>
            <person name="Quail M.A."/>
            <person name="Thurston S."/>
            <person name="Dougan G."/>
            <person name="Hayashi T."/>
            <person name="Parkhill J."/>
            <person name="Frankel G."/>
        </authorList>
    </citation>
    <scope>NUCLEOTIDE SEQUENCE [LARGE SCALE GENOMIC DNA]</scope>
    <source>
        <strain>E2348/69 / EPEC</strain>
    </source>
</reference>
<comment type="function">
    <text evidence="1">Catalyzes the decarboxylation of 3-keto-L-gulonate-6-P into L-xylulose-5-P. Is involved in the anaerobic L-ascorbate utilization.</text>
</comment>
<comment type="catalytic activity">
    <reaction evidence="1">
        <text>3-dehydro-L-gulonate 6-phosphate + H(+) = L-xylulose 5-phosphate + CO2</text>
        <dbReference type="Rhea" id="RHEA:14353"/>
        <dbReference type="ChEBI" id="CHEBI:15378"/>
        <dbReference type="ChEBI" id="CHEBI:16526"/>
        <dbReference type="ChEBI" id="CHEBI:57829"/>
        <dbReference type="ChEBI" id="CHEBI:58774"/>
        <dbReference type="EC" id="4.1.1.85"/>
    </reaction>
</comment>
<comment type="cofactor">
    <cofactor evidence="1">
        <name>Mg(2+)</name>
        <dbReference type="ChEBI" id="CHEBI:18420"/>
    </cofactor>
    <text evidence="1">Binds 1 Mg(2+) ion per subunit.</text>
</comment>
<comment type="pathway">
    <text evidence="1">Cofactor degradation; L-ascorbate degradation; D-xylulose 5-phosphate from L-ascorbate: step 2/4.</text>
</comment>
<comment type="subunit">
    <text evidence="1">Homodimer.</text>
</comment>
<comment type="induction">
    <text evidence="1">Induced by L-ascorbate. Repressed by UlaR.</text>
</comment>
<comment type="similarity">
    <text evidence="1">Belongs to the HPS/KGPDC family. KGPDC subfamily.</text>
</comment>
<name>ULAD_ECO27</name>
<organism>
    <name type="scientific">Escherichia coli O127:H6 (strain E2348/69 / EPEC)</name>
    <dbReference type="NCBI Taxonomy" id="574521"/>
    <lineage>
        <taxon>Bacteria</taxon>
        <taxon>Pseudomonadati</taxon>
        <taxon>Pseudomonadota</taxon>
        <taxon>Gammaproteobacteria</taxon>
        <taxon>Enterobacterales</taxon>
        <taxon>Enterobacteriaceae</taxon>
        <taxon>Escherichia</taxon>
    </lineage>
</organism>